<feature type="chain" id="PRO_1000057780" description="Deoxyuridine 5'-triphosphate nucleotidohydrolase">
    <location>
        <begin position="1"/>
        <end position="152"/>
    </location>
</feature>
<feature type="binding site" evidence="1">
    <location>
        <begin position="71"/>
        <end position="73"/>
    </location>
    <ligand>
        <name>substrate</name>
    </ligand>
</feature>
<feature type="binding site" evidence="1">
    <location>
        <position position="84"/>
    </location>
    <ligand>
        <name>substrate</name>
    </ligand>
</feature>
<feature type="binding site" evidence="1">
    <location>
        <begin position="88"/>
        <end position="90"/>
    </location>
    <ligand>
        <name>substrate</name>
    </ligand>
</feature>
<feature type="binding site" evidence="1">
    <location>
        <position position="98"/>
    </location>
    <ligand>
        <name>substrate</name>
    </ligand>
</feature>
<comment type="function">
    <text evidence="1">This enzyme is involved in nucleotide metabolism: it produces dUMP, the immediate precursor of thymidine nucleotides and it decreases the intracellular concentration of dUTP so that uracil cannot be incorporated into DNA.</text>
</comment>
<comment type="catalytic activity">
    <reaction evidence="1">
        <text>dUTP + H2O = dUMP + diphosphate + H(+)</text>
        <dbReference type="Rhea" id="RHEA:10248"/>
        <dbReference type="ChEBI" id="CHEBI:15377"/>
        <dbReference type="ChEBI" id="CHEBI:15378"/>
        <dbReference type="ChEBI" id="CHEBI:33019"/>
        <dbReference type="ChEBI" id="CHEBI:61555"/>
        <dbReference type="ChEBI" id="CHEBI:246422"/>
        <dbReference type="EC" id="3.6.1.23"/>
    </reaction>
</comment>
<comment type="cofactor">
    <cofactor evidence="1">
        <name>Mg(2+)</name>
        <dbReference type="ChEBI" id="CHEBI:18420"/>
    </cofactor>
</comment>
<comment type="pathway">
    <text evidence="1">Pyrimidine metabolism; dUMP biosynthesis; dUMP from dCTP (dUTP route): step 2/2.</text>
</comment>
<comment type="similarity">
    <text evidence="1">Belongs to the dUTPase family.</text>
</comment>
<dbReference type="EC" id="3.6.1.23" evidence="1"/>
<dbReference type="EMBL" id="CP000826">
    <property type="protein sequence ID" value="ABV43937.1"/>
    <property type="molecule type" value="Genomic_DNA"/>
</dbReference>
<dbReference type="SMR" id="A8GLE7"/>
<dbReference type="STRING" id="399741.Spro_4844"/>
<dbReference type="KEGG" id="spe:Spro_4844"/>
<dbReference type="eggNOG" id="COG0756">
    <property type="taxonomic scope" value="Bacteria"/>
</dbReference>
<dbReference type="HOGENOM" id="CLU_068508_1_1_6"/>
<dbReference type="OrthoDB" id="9809956at2"/>
<dbReference type="UniPathway" id="UPA00610">
    <property type="reaction ID" value="UER00666"/>
</dbReference>
<dbReference type="GO" id="GO:0004170">
    <property type="term" value="F:dUTP diphosphatase activity"/>
    <property type="evidence" value="ECO:0007669"/>
    <property type="project" value="UniProtKB-UniRule"/>
</dbReference>
<dbReference type="GO" id="GO:0000287">
    <property type="term" value="F:magnesium ion binding"/>
    <property type="evidence" value="ECO:0007669"/>
    <property type="project" value="UniProtKB-UniRule"/>
</dbReference>
<dbReference type="GO" id="GO:0006226">
    <property type="term" value="P:dUMP biosynthetic process"/>
    <property type="evidence" value="ECO:0007669"/>
    <property type="project" value="UniProtKB-UniRule"/>
</dbReference>
<dbReference type="GO" id="GO:0046081">
    <property type="term" value="P:dUTP catabolic process"/>
    <property type="evidence" value="ECO:0007669"/>
    <property type="project" value="InterPro"/>
</dbReference>
<dbReference type="CDD" id="cd07557">
    <property type="entry name" value="trimeric_dUTPase"/>
    <property type="match status" value="1"/>
</dbReference>
<dbReference type="FunFam" id="2.70.40.10:FF:000002">
    <property type="entry name" value="dUTP diphosphatase"/>
    <property type="match status" value="1"/>
</dbReference>
<dbReference type="Gene3D" id="2.70.40.10">
    <property type="match status" value="1"/>
</dbReference>
<dbReference type="HAMAP" id="MF_00116">
    <property type="entry name" value="dUTPase_bact"/>
    <property type="match status" value="1"/>
</dbReference>
<dbReference type="InterPro" id="IPR008181">
    <property type="entry name" value="dUTPase"/>
</dbReference>
<dbReference type="InterPro" id="IPR029054">
    <property type="entry name" value="dUTPase-like"/>
</dbReference>
<dbReference type="InterPro" id="IPR036157">
    <property type="entry name" value="dUTPase-like_sf"/>
</dbReference>
<dbReference type="InterPro" id="IPR033704">
    <property type="entry name" value="dUTPase_trimeric"/>
</dbReference>
<dbReference type="NCBIfam" id="TIGR00576">
    <property type="entry name" value="dut"/>
    <property type="match status" value="1"/>
</dbReference>
<dbReference type="NCBIfam" id="NF001862">
    <property type="entry name" value="PRK00601.1"/>
    <property type="match status" value="1"/>
</dbReference>
<dbReference type="PANTHER" id="PTHR11241">
    <property type="entry name" value="DEOXYURIDINE 5'-TRIPHOSPHATE NUCLEOTIDOHYDROLASE"/>
    <property type="match status" value="1"/>
</dbReference>
<dbReference type="PANTHER" id="PTHR11241:SF0">
    <property type="entry name" value="DEOXYURIDINE 5'-TRIPHOSPHATE NUCLEOTIDOHYDROLASE"/>
    <property type="match status" value="1"/>
</dbReference>
<dbReference type="Pfam" id="PF00692">
    <property type="entry name" value="dUTPase"/>
    <property type="match status" value="1"/>
</dbReference>
<dbReference type="SUPFAM" id="SSF51283">
    <property type="entry name" value="dUTPase-like"/>
    <property type="match status" value="1"/>
</dbReference>
<keyword id="KW-0378">Hydrolase</keyword>
<keyword id="KW-0460">Magnesium</keyword>
<keyword id="KW-0479">Metal-binding</keyword>
<keyword id="KW-0546">Nucleotide metabolism</keyword>
<evidence type="ECO:0000255" key="1">
    <source>
        <dbReference type="HAMAP-Rule" id="MF_00116"/>
    </source>
</evidence>
<protein>
    <recommendedName>
        <fullName evidence="1">Deoxyuridine 5'-triphosphate nucleotidohydrolase</fullName>
        <shortName evidence="1">dUTPase</shortName>
        <ecNumber evidence="1">3.6.1.23</ecNumber>
    </recommendedName>
    <alternativeName>
        <fullName evidence="1">dUTP pyrophosphatase</fullName>
    </alternativeName>
</protein>
<name>DUT_SERP5</name>
<organism>
    <name type="scientific">Serratia proteamaculans (strain 568)</name>
    <dbReference type="NCBI Taxonomy" id="399741"/>
    <lineage>
        <taxon>Bacteria</taxon>
        <taxon>Pseudomonadati</taxon>
        <taxon>Pseudomonadota</taxon>
        <taxon>Gammaproteobacteria</taxon>
        <taxon>Enterobacterales</taxon>
        <taxon>Yersiniaceae</taxon>
        <taxon>Serratia</taxon>
    </lineage>
</organism>
<reference key="1">
    <citation type="submission" date="2007-09" db="EMBL/GenBank/DDBJ databases">
        <title>Complete sequence of chromosome of Serratia proteamaculans 568.</title>
        <authorList>
            <consortium name="US DOE Joint Genome Institute"/>
            <person name="Copeland A."/>
            <person name="Lucas S."/>
            <person name="Lapidus A."/>
            <person name="Barry K."/>
            <person name="Glavina del Rio T."/>
            <person name="Dalin E."/>
            <person name="Tice H."/>
            <person name="Pitluck S."/>
            <person name="Chain P."/>
            <person name="Malfatti S."/>
            <person name="Shin M."/>
            <person name="Vergez L."/>
            <person name="Schmutz J."/>
            <person name="Larimer F."/>
            <person name="Land M."/>
            <person name="Hauser L."/>
            <person name="Kyrpides N."/>
            <person name="Kim E."/>
            <person name="Taghavi S."/>
            <person name="Newman L."/>
            <person name="Vangronsveld J."/>
            <person name="van der Lelie D."/>
            <person name="Richardson P."/>
        </authorList>
    </citation>
    <scope>NUCLEOTIDE SEQUENCE [LARGE SCALE GENOMIC DNA]</scope>
    <source>
        <strain>568</strain>
    </source>
</reference>
<sequence>MMKKIDVKILDPRIGKDFPLPTYATPGSAGLDLRACLDSAVELAPGETQLLPTGLAIHIADTDLAAVILPRSGLGHKHGVVLGNLVGLIDSDYQGQLMVSVWNRGQKSFTIEPGERIAQMVFVPVVQAEFNLVEEFDSSERGAGGFGHSGRH</sequence>
<proteinExistence type="inferred from homology"/>
<gene>
    <name evidence="1" type="primary">dut</name>
    <name type="ordered locus">Spro_4844</name>
</gene>
<accession>A8GLE7</accession>